<accession>P0C1Q2</accession>
<accession>A2AKR2</accession>
<name>PDE11_MOUSE</name>
<evidence type="ECO:0000250" key="1">
    <source>
        <dbReference type="UniProtKB" id="O76083"/>
    </source>
</evidence>
<evidence type="ECO:0000250" key="2">
    <source>
        <dbReference type="UniProtKB" id="Q922S4"/>
    </source>
</evidence>
<evidence type="ECO:0000250" key="3">
    <source>
        <dbReference type="UniProtKB" id="Q9HCR9"/>
    </source>
</evidence>
<evidence type="ECO:0000255" key="4">
    <source>
        <dbReference type="PROSITE-ProRule" id="PRU01192"/>
    </source>
</evidence>
<evidence type="ECO:0000256" key="5">
    <source>
        <dbReference type="SAM" id="MobiDB-lite"/>
    </source>
</evidence>
<evidence type="ECO:0000269" key="6">
    <source>
    </source>
</evidence>
<evidence type="ECO:0000305" key="7"/>
<evidence type="ECO:0007744" key="8">
    <source>
    </source>
</evidence>
<organism>
    <name type="scientific">Mus musculus</name>
    <name type="common">Mouse</name>
    <dbReference type="NCBI Taxonomy" id="10090"/>
    <lineage>
        <taxon>Eukaryota</taxon>
        <taxon>Metazoa</taxon>
        <taxon>Chordata</taxon>
        <taxon>Craniata</taxon>
        <taxon>Vertebrata</taxon>
        <taxon>Euteleostomi</taxon>
        <taxon>Mammalia</taxon>
        <taxon>Eutheria</taxon>
        <taxon>Euarchontoglires</taxon>
        <taxon>Glires</taxon>
        <taxon>Rodentia</taxon>
        <taxon>Myomorpha</taxon>
        <taxon>Muroidea</taxon>
        <taxon>Muridae</taxon>
        <taxon>Murinae</taxon>
        <taxon>Mus</taxon>
        <taxon>Mus</taxon>
    </lineage>
</organism>
<gene>
    <name type="primary">Pde11a</name>
</gene>
<reference key="1">
    <citation type="journal article" date="2009" name="PLoS Biol.">
        <title>Lineage-specific biology revealed by a finished genome assembly of the mouse.</title>
        <authorList>
            <person name="Church D.M."/>
            <person name="Goodstadt L."/>
            <person name="Hillier L.W."/>
            <person name="Zody M.C."/>
            <person name="Goldstein S."/>
            <person name="She X."/>
            <person name="Bult C.J."/>
            <person name="Agarwala R."/>
            <person name="Cherry J.L."/>
            <person name="DiCuccio M."/>
            <person name="Hlavina W."/>
            <person name="Kapustin Y."/>
            <person name="Meric P."/>
            <person name="Maglott D."/>
            <person name="Birtle Z."/>
            <person name="Marques A.C."/>
            <person name="Graves T."/>
            <person name="Zhou S."/>
            <person name="Teague B."/>
            <person name="Potamousis K."/>
            <person name="Churas C."/>
            <person name="Place M."/>
            <person name="Herschleb J."/>
            <person name="Runnheim R."/>
            <person name="Forrest D."/>
            <person name="Amos-Landgraf J."/>
            <person name="Schwartz D.C."/>
            <person name="Cheng Z."/>
            <person name="Lindblad-Toh K."/>
            <person name="Eichler E.E."/>
            <person name="Ponting C.P."/>
        </authorList>
    </citation>
    <scope>NUCLEOTIDE SEQUENCE [LARGE SCALE GENOMIC DNA]</scope>
    <source>
        <strain>C57BL/6J</strain>
    </source>
</reference>
<reference key="2">
    <citation type="journal article" date="2005" name="Int. J. Impot. Res.">
        <title>Phosphodiesterase 11 (PDE11) regulation of spermatozoa physiology.</title>
        <authorList>
            <person name="Wayman C."/>
            <person name="Phillips S."/>
            <person name="Lunny C."/>
            <person name="Webb T."/>
            <person name="Fawcett L."/>
            <person name="Baxendale R."/>
            <person name="Burgess G."/>
        </authorList>
    </citation>
    <scope>TISSUE SPECIFICITY</scope>
    <scope>FUNCTION</scope>
    <scope>DISRUPTION PHENOTYPE</scope>
</reference>
<reference key="3">
    <citation type="journal article" date="2010" name="Cell">
        <title>A tissue-specific atlas of mouse protein phosphorylation and expression.</title>
        <authorList>
            <person name="Huttlin E.L."/>
            <person name="Jedrychowski M.P."/>
            <person name="Elias J.E."/>
            <person name="Goswami T."/>
            <person name="Rad R."/>
            <person name="Beausoleil S.A."/>
            <person name="Villen J."/>
            <person name="Haas W."/>
            <person name="Sowa M.E."/>
            <person name="Gygi S.P."/>
        </authorList>
    </citation>
    <scope>PHOSPHORYLATION [LARGE SCALE ANALYSIS] AT SER-162 AND SER-163</scope>
    <scope>IDENTIFICATION BY MASS SPECTROMETRY [LARGE SCALE ANALYSIS]</scope>
    <source>
        <tissue>Brain</tissue>
    </source>
</reference>
<comment type="function">
    <text evidence="3 6">Plays a role in signal transduction by regulating the intracellular concentration of cyclic nucleotides cAMP and cGMP (PubMed:15800654). Catalyzes the hydrolysis of both cAMP and cGMP to 5'-AMP and 5'-GMP, respectively (By similarity).</text>
</comment>
<comment type="catalytic activity">
    <reaction evidence="3">
        <text>3',5'-cyclic GMP + H2O = GMP + H(+)</text>
        <dbReference type="Rhea" id="RHEA:16957"/>
        <dbReference type="ChEBI" id="CHEBI:15377"/>
        <dbReference type="ChEBI" id="CHEBI:15378"/>
        <dbReference type="ChEBI" id="CHEBI:57746"/>
        <dbReference type="ChEBI" id="CHEBI:58115"/>
        <dbReference type="EC" id="3.1.4.35"/>
    </reaction>
</comment>
<comment type="catalytic activity">
    <reaction evidence="3">
        <text>3',5'-cyclic AMP + H2O = AMP + H(+)</text>
        <dbReference type="Rhea" id="RHEA:25277"/>
        <dbReference type="ChEBI" id="CHEBI:15377"/>
        <dbReference type="ChEBI" id="CHEBI:15378"/>
        <dbReference type="ChEBI" id="CHEBI:58165"/>
        <dbReference type="ChEBI" id="CHEBI:456215"/>
        <dbReference type="EC" id="3.1.4.53"/>
    </reaction>
</comment>
<comment type="cofactor">
    <cofactor evidence="1">
        <name>a divalent metal cation</name>
        <dbReference type="ChEBI" id="CHEBI:60240"/>
    </cofactor>
    <text evidence="1">Binds 2 divalent metal cations per subunit. Site 1 may preferentially bind zinc ions, while site 2 has a preference for magnesium and/or manganese ions.</text>
</comment>
<comment type="activity regulation">
    <text evidence="3">Inhibited by 3-isobutyl-1-methylxanthine (IBMX), zaprinast and dipyridamole. cGMP acts as an allosteric activator (By similarity).</text>
</comment>
<comment type="subcellular location">
    <subcellularLocation>
        <location evidence="3">Cytoplasm</location>
        <location evidence="3">Cytosol</location>
    </subcellularLocation>
</comment>
<comment type="tissue specificity">
    <text evidence="6">Expressed in testis and developing spermatoza.</text>
</comment>
<comment type="domain">
    <text evidence="3">The tandem GAF domains bind cGMP, and regulate enzyme activity. The binding of cGMP stimulates enzyme activity.</text>
</comment>
<comment type="disruption phenotype">
    <text evidence="6">Mice live well and have no impaired fertility. They do however display reduced sperm concentration, rate of forward progression and percentage of live spermatozoa. Pre-ejaculated sperm display increased premature/spontaneous capacitance.</text>
</comment>
<comment type="similarity">
    <text evidence="7">Belongs to the cyclic nucleotide phosphodiesterase family.</text>
</comment>
<proteinExistence type="evidence at protein level"/>
<feature type="chain" id="PRO_0000247041" description="Dual 3',5'-cyclic-AMP and -GMP phosphodiesterase 11A">
    <location>
        <begin position="1"/>
        <end position="933"/>
    </location>
</feature>
<feature type="domain" description="GAF 1">
    <location>
        <begin position="217"/>
        <end position="370"/>
    </location>
</feature>
<feature type="domain" description="GAF 2">
    <location>
        <begin position="402"/>
        <end position="558"/>
    </location>
</feature>
<feature type="domain" description="PDEase" evidence="4">
    <location>
        <begin position="588"/>
        <end position="912"/>
    </location>
</feature>
<feature type="region of interest" description="Disordered" evidence="5">
    <location>
        <begin position="42"/>
        <end position="121"/>
    </location>
</feature>
<feature type="region of interest" description="Disordered" evidence="5">
    <location>
        <begin position="913"/>
        <end position="933"/>
    </location>
</feature>
<feature type="active site" description="Proton donor" evidence="1">
    <location>
        <position position="664"/>
    </location>
</feature>
<feature type="binding site" evidence="2">
    <location>
        <position position="424"/>
    </location>
    <ligand>
        <name>3',5'-cyclic GMP</name>
        <dbReference type="ChEBI" id="CHEBI:57746"/>
    </ligand>
</feature>
<feature type="binding site" evidence="4">
    <location>
        <position position="668"/>
    </location>
    <ligand>
        <name>a divalent metal cation</name>
        <dbReference type="ChEBI" id="CHEBI:60240"/>
        <label>1</label>
    </ligand>
</feature>
<feature type="binding site" evidence="4">
    <location>
        <position position="704"/>
    </location>
    <ligand>
        <name>a divalent metal cation</name>
        <dbReference type="ChEBI" id="CHEBI:60240"/>
        <label>1</label>
    </ligand>
</feature>
<feature type="binding site" evidence="4">
    <location>
        <position position="705"/>
    </location>
    <ligand>
        <name>a divalent metal cation</name>
        <dbReference type="ChEBI" id="CHEBI:60240"/>
        <label>1</label>
    </ligand>
</feature>
<feature type="binding site" evidence="4">
    <location>
        <position position="705"/>
    </location>
    <ligand>
        <name>a divalent metal cation</name>
        <dbReference type="ChEBI" id="CHEBI:60240"/>
        <label>2</label>
    </ligand>
</feature>
<feature type="binding site" evidence="4">
    <location>
        <position position="816"/>
    </location>
    <ligand>
        <name>a divalent metal cation</name>
        <dbReference type="ChEBI" id="CHEBI:60240"/>
        <label>1</label>
    </ligand>
</feature>
<feature type="modified residue" description="Phosphoserine" evidence="8">
    <location>
        <position position="162"/>
    </location>
</feature>
<feature type="modified residue" description="Phosphoserine" evidence="8">
    <location>
        <position position="163"/>
    </location>
</feature>
<feature type="modified residue" description="Phosphoserine" evidence="3">
    <location>
        <position position="239"/>
    </location>
</feature>
<sequence length="933" mass="104563">MAASRLDFGEVETFLDRHPELFEDYLMRKGKQELVDKWLQRHTSGQGASSLRPALAGASSLAQSNAKGSPGIGGGAGPQGSAHSHPTPGGGESAGVPLSPSWASGSRGDGSLQRRASQKELRKSFARSKAIHVNRTYDEQVTSRAQEPLSSVRRRALLRKASSLPPTTAHILSALLESRVNLPQYPPTAIDYKCHLKKHNERQFFLELVKDISNDLDLTSLSYKILIFVCLMVDADRCSLFLVEGAAAGKKTLVSKFFDVHAGTPLLPCSSTENSNEVQVPWGKGIIGYVGEHGETVNIPDAYQDRRFNDEIDKLTGYKTKSLLCMPIRNSDGEIIGVAQAINKVPEGAPFTEDDEKVMQMYLPFCGIAISNAQLFAASRKEYERSRALLEVVNDLFEEQTDLEKIVKKIMHRAQTLLKCERCSVLLLEDIESPVVKFTKSFELMSPKCSADAENSFKESVEKSSYSDWLINNSIAELVASTGLPVNVSDAYQDPRFDAEADQISGFHIRSVLCVPIWNSNHQIIGVAQVLNRLDGKPFDDADQRLFEAFVIFCGLGINNTIMYDQVKKSWAKQSVALDVLSYHATCSKAEVDKFKAANIPLVSELAIDDIHFDDFSLDVDAMITAALRMFMELGMVQKFKIDYETLCRWLLTVRKNYRMVLYHNWRHAFNVCQLMFAMLTTAGFQEILTEVEILAVIVGCLCHDLDHRGTNNAFQAKSDSALAQLYGTSATLEHHHFNHAVMILQSEGHNIFANLSSKEYSDLMQLLKQSILATDLTLYFERRTEFFELVRKGDYDWSITSHRDVFRSMLMTACDLGAVTKPWEISRQVAELVTSEFFEQGDRERSELKLTPSAIFDRNRKDELPRLQLEWIDSICMPLYQALVKVNAKLKPMLDSVAANRRKWEELHQKRLQVSAASPDPASPMVAGEDRL</sequence>
<dbReference type="EC" id="3.1.4.35" evidence="3"/>
<dbReference type="EC" id="3.1.4.53" evidence="3"/>
<dbReference type="EMBL" id="AL772341">
    <property type="status" value="NOT_ANNOTATED_CDS"/>
    <property type="molecule type" value="Genomic_DNA"/>
</dbReference>
<dbReference type="EMBL" id="AL845373">
    <property type="status" value="NOT_ANNOTATED_CDS"/>
    <property type="molecule type" value="Genomic_DNA"/>
</dbReference>
<dbReference type="EMBL" id="AL929133">
    <property type="status" value="NOT_ANNOTATED_CDS"/>
    <property type="molecule type" value="Genomic_DNA"/>
</dbReference>
<dbReference type="EMBL" id="AL929589">
    <property type="status" value="NOT_ANNOTATED_CDS"/>
    <property type="molecule type" value="Genomic_DNA"/>
</dbReference>
<dbReference type="CCDS" id="CCDS38152.1"/>
<dbReference type="RefSeq" id="NP_001074502.1">
    <property type="nucleotide sequence ID" value="NM_001081033.3"/>
</dbReference>
<dbReference type="SMR" id="P0C1Q2"/>
<dbReference type="BioGRID" id="232315">
    <property type="interactions" value="1"/>
</dbReference>
<dbReference type="FunCoup" id="P0C1Q2">
    <property type="interactions" value="165"/>
</dbReference>
<dbReference type="STRING" id="10090.ENSMUSP00000097572"/>
<dbReference type="BindingDB" id="P0C1Q2"/>
<dbReference type="ChEMBL" id="CHEMBL4295711"/>
<dbReference type="GlyGen" id="P0C1Q2">
    <property type="glycosylation" value="1 site"/>
</dbReference>
<dbReference type="iPTMnet" id="P0C1Q2"/>
<dbReference type="PhosphoSitePlus" id="P0C1Q2"/>
<dbReference type="SwissPalm" id="P0C1Q2"/>
<dbReference type="PaxDb" id="10090-ENSMUSP00000097572"/>
<dbReference type="ProteomicsDB" id="287803"/>
<dbReference type="Ensembl" id="ENSMUST00000099992.10">
    <property type="protein sequence ID" value="ENSMUSP00000097572.4"/>
    <property type="gene ID" value="ENSMUSG00000075270.12"/>
</dbReference>
<dbReference type="GeneID" id="241489"/>
<dbReference type="KEGG" id="mmu:241489"/>
<dbReference type="UCSC" id="uc008kex.1">
    <property type="organism name" value="mouse"/>
</dbReference>
<dbReference type="AGR" id="MGI:3036251"/>
<dbReference type="CTD" id="50940"/>
<dbReference type="MGI" id="MGI:3036251">
    <property type="gene designation" value="Pde11a"/>
</dbReference>
<dbReference type="VEuPathDB" id="HostDB:ENSMUSG00000075270"/>
<dbReference type="eggNOG" id="KOG3689">
    <property type="taxonomic scope" value="Eukaryota"/>
</dbReference>
<dbReference type="GeneTree" id="ENSGT00940000162151"/>
<dbReference type="HOGENOM" id="CLU_006980_0_1_1"/>
<dbReference type="InParanoid" id="P0C1Q2"/>
<dbReference type="OMA" id="HIQARTR"/>
<dbReference type="OrthoDB" id="74705at2759"/>
<dbReference type="PhylomeDB" id="P0C1Q2"/>
<dbReference type="TreeFam" id="TF316499"/>
<dbReference type="Reactome" id="R-MMU-418457">
    <property type="pathway name" value="cGMP effects"/>
</dbReference>
<dbReference type="Reactome" id="R-MMU-418555">
    <property type="pathway name" value="G alpha (s) signalling events"/>
</dbReference>
<dbReference type="BioGRID-ORCS" id="241489">
    <property type="hits" value="1 hit in 76 CRISPR screens"/>
</dbReference>
<dbReference type="PRO" id="PR:P0C1Q2"/>
<dbReference type="Proteomes" id="UP000000589">
    <property type="component" value="Chromosome 2"/>
</dbReference>
<dbReference type="RNAct" id="P0C1Q2">
    <property type="molecule type" value="protein"/>
</dbReference>
<dbReference type="Bgee" id="ENSMUSG00000075270">
    <property type="expression patterns" value="Expressed in Ammon's horn and 46 other cell types or tissues"/>
</dbReference>
<dbReference type="ExpressionAtlas" id="P0C1Q2">
    <property type="expression patterns" value="baseline and differential"/>
</dbReference>
<dbReference type="GO" id="GO:0005829">
    <property type="term" value="C:cytosol"/>
    <property type="evidence" value="ECO:0007669"/>
    <property type="project" value="UniProtKB-SubCell"/>
</dbReference>
<dbReference type="GO" id="GO:0004118">
    <property type="term" value="F:3',5'-cGMP-stimulated cyclic-nucleotide phosphodiesterase activity"/>
    <property type="evidence" value="ECO:0000250"/>
    <property type="project" value="UniProtKB"/>
</dbReference>
<dbReference type="GO" id="GO:0004115">
    <property type="term" value="F:3',5'-cyclic-AMP phosphodiesterase activity"/>
    <property type="evidence" value="ECO:0007669"/>
    <property type="project" value="UniProtKB-EC"/>
</dbReference>
<dbReference type="GO" id="GO:0047555">
    <property type="term" value="F:3',5'-cyclic-GMP phosphodiesterase activity"/>
    <property type="evidence" value="ECO:0007669"/>
    <property type="project" value="UniProtKB-EC"/>
</dbReference>
<dbReference type="GO" id="GO:0030553">
    <property type="term" value="F:cGMP binding"/>
    <property type="evidence" value="ECO:0000250"/>
    <property type="project" value="UniProtKB"/>
</dbReference>
<dbReference type="GO" id="GO:0046872">
    <property type="term" value="F:metal ion binding"/>
    <property type="evidence" value="ECO:0007669"/>
    <property type="project" value="UniProtKB-KW"/>
</dbReference>
<dbReference type="GO" id="GO:0007165">
    <property type="term" value="P:signal transduction"/>
    <property type="evidence" value="ECO:0007669"/>
    <property type="project" value="InterPro"/>
</dbReference>
<dbReference type="CDD" id="cd00077">
    <property type="entry name" value="HDc"/>
    <property type="match status" value="1"/>
</dbReference>
<dbReference type="FunFam" id="1.10.1300.10:FF:000003">
    <property type="entry name" value="Phosphodiesterase"/>
    <property type="match status" value="1"/>
</dbReference>
<dbReference type="FunFam" id="3.30.450.40:FF:000004">
    <property type="entry name" value="Phosphodiesterase"/>
    <property type="match status" value="1"/>
</dbReference>
<dbReference type="FunFam" id="3.30.450.40:FF:000018">
    <property type="entry name" value="Phosphodiesterase"/>
    <property type="match status" value="1"/>
</dbReference>
<dbReference type="Gene3D" id="3.30.450.40">
    <property type="match status" value="2"/>
</dbReference>
<dbReference type="Gene3D" id="1.10.1300.10">
    <property type="entry name" value="3'5'-cyclic nucleotide phosphodiesterase, catalytic domain"/>
    <property type="match status" value="1"/>
</dbReference>
<dbReference type="InterPro" id="IPR003018">
    <property type="entry name" value="GAF"/>
</dbReference>
<dbReference type="InterPro" id="IPR029016">
    <property type="entry name" value="GAF-like_dom_sf"/>
</dbReference>
<dbReference type="InterPro" id="IPR003607">
    <property type="entry name" value="HD/PDEase_dom"/>
</dbReference>
<dbReference type="InterPro" id="IPR023088">
    <property type="entry name" value="PDEase"/>
</dbReference>
<dbReference type="InterPro" id="IPR002073">
    <property type="entry name" value="PDEase_catalytic_dom"/>
</dbReference>
<dbReference type="InterPro" id="IPR036971">
    <property type="entry name" value="PDEase_catalytic_dom_sf"/>
</dbReference>
<dbReference type="InterPro" id="IPR023174">
    <property type="entry name" value="PDEase_CS"/>
</dbReference>
<dbReference type="PANTHER" id="PTHR11347">
    <property type="entry name" value="CYCLIC NUCLEOTIDE PHOSPHODIESTERASE"/>
    <property type="match status" value="1"/>
</dbReference>
<dbReference type="Pfam" id="PF01590">
    <property type="entry name" value="GAF"/>
    <property type="match status" value="2"/>
</dbReference>
<dbReference type="Pfam" id="PF00233">
    <property type="entry name" value="PDEase_I"/>
    <property type="match status" value="1"/>
</dbReference>
<dbReference type="PRINTS" id="PR00387">
    <property type="entry name" value="PDIESTERASE1"/>
</dbReference>
<dbReference type="SMART" id="SM00065">
    <property type="entry name" value="GAF"/>
    <property type="match status" value="2"/>
</dbReference>
<dbReference type="SMART" id="SM00471">
    <property type="entry name" value="HDc"/>
    <property type="match status" value="1"/>
</dbReference>
<dbReference type="SUPFAM" id="SSF55781">
    <property type="entry name" value="GAF domain-like"/>
    <property type="match status" value="2"/>
</dbReference>
<dbReference type="SUPFAM" id="SSF109604">
    <property type="entry name" value="HD-domain/PDEase-like"/>
    <property type="match status" value="1"/>
</dbReference>
<dbReference type="PROSITE" id="PS00126">
    <property type="entry name" value="PDEASE_I_1"/>
    <property type="match status" value="1"/>
</dbReference>
<dbReference type="PROSITE" id="PS51845">
    <property type="entry name" value="PDEASE_I_2"/>
    <property type="match status" value="1"/>
</dbReference>
<protein>
    <recommendedName>
        <fullName>Dual 3',5'-cyclic-AMP and -GMP phosphodiesterase 11A</fullName>
        <ecNumber evidence="3">3.1.4.35</ecNumber>
        <ecNumber evidence="3">3.1.4.53</ecNumber>
    </recommendedName>
    <alternativeName>
        <fullName>cAMP and cGMP phosphodiesterase 11A</fullName>
    </alternativeName>
</protein>
<keyword id="KW-0021">Allosteric enzyme</keyword>
<keyword id="KW-0114">cAMP</keyword>
<keyword id="KW-0140">cGMP</keyword>
<keyword id="KW-0963">Cytoplasm</keyword>
<keyword id="KW-0378">Hydrolase</keyword>
<keyword id="KW-0479">Metal-binding</keyword>
<keyword id="KW-0597">Phosphoprotein</keyword>
<keyword id="KW-1185">Reference proteome</keyword>
<keyword id="KW-0677">Repeat</keyword>